<feature type="chain" id="PRO_0000364092" description="Sodium/proline symporter">
    <location>
        <begin position="1"/>
        <end position="512"/>
    </location>
</feature>
<feature type="transmembrane region" description="Helical" evidence="3">
    <location>
        <begin position="16"/>
        <end position="36"/>
    </location>
</feature>
<feature type="transmembrane region" description="Helical" evidence="3">
    <location>
        <begin position="54"/>
        <end position="74"/>
    </location>
</feature>
<feature type="transmembrane region" description="Helical" evidence="3">
    <location>
        <begin position="85"/>
        <end position="105"/>
    </location>
</feature>
<feature type="transmembrane region" description="Helical" evidence="3">
    <location>
        <begin position="139"/>
        <end position="159"/>
    </location>
</feature>
<feature type="transmembrane region" description="Helical" evidence="3">
    <location>
        <begin position="174"/>
        <end position="194"/>
    </location>
</feature>
<feature type="transmembrane region" description="Helical" evidence="3">
    <location>
        <begin position="200"/>
        <end position="220"/>
    </location>
</feature>
<feature type="transmembrane region" description="Helical" evidence="3">
    <location>
        <begin position="240"/>
        <end position="260"/>
    </location>
</feature>
<feature type="transmembrane region" description="Helical" evidence="3">
    <location>
        <begin position="286"/>
        <end position="306"/>
    </location>
</feature>
<feature type="transmembrane region" description="Helical" evidence="3">
    <location>
        <begin position="327"/>
        <end position="347"/>
    </location>
</feature>
<feature type="transmembrane region" description="Helical" evidence="3">
    <location>
        <begin position="381"/>
        <end position="401"/>
    </location>
</feature>
<feature type="transmembrane region" description="Helical" evidence="3">
    <location>
        <begin position="410"/>
        <end position="430"/>
    </location>
</feature>
<feature type="transmembrane region" description="Helical" evidence="3">
    <location>
        <begin position="438"/>
        <end position="458"/>
    </location>
</feature>
<feature type="transmembrane region" description="Helical" evidence="3">
    <location>
        <begin position="467"/>
        <end position="487"/>
    </location>
</feature>
<protein>
    <recommendedName>
        <fullName>Sodium/proline symporter</fullName>
    </recommendedName>
    <alternativeName>
        <fullName>Proline permease</fullName>
    </alternativeName>
</protein>
<organism>
    <name type="scientific">Staphylococcus aureus (strain bovine RF122 / ET3-1)</name>
    <dbReference type="NCBI Taxonomy" id="273036"/>
    <lineage>
        <taxon>Bacteria</taxon>
        <taxon>Bacillati</taxon>
        <taxon>Bacillota</taxon>
        <taxon>Bacilli</taxon>
        <taxon>Bacillales</taxon>
        <taxon>Staphylococcaceae</taxon>
        <taxon>Staphylococcus</taxon>
    </lineage>
</organism>
<accession>Q2YU74</accession>
<sequence length="512" mass="55932">MLTMGTALSQQVNANWQTYIMIAVYFLILIVIGFYGYKQATGNLSEYMLGGRSIGPYITALSAGASDMSGWMIMGLPGSVYGTGLSAMWITIGLTLGAYINYFVVAPRLRVYTELAGDAITLPDFFKNRLNDKNNVLKIISGLIIVVFFTLYTHSGFVSGGKLFESAFGLDYHFGLILVAFIVIFYTFFGGYLAVSITDFFQGVIMLIAMVMVPIVAMMNLNGWGTFHDVAAMKPTNLNLFKGLSFIGTISLFSWGLGYFGQPHIIVRFMSIKSHKMLPKARRLGISWMAVGLLGAVAVGLTGIAFVPAYHIKLEDPETLFIVMSQVLFHPLVGGFLLAAILAAIMSTISSQLLVTSSSLTEDFYKLIRGEEKAKTHQKEFVMIGRLSVLVVAIVAIAIAWNPNDTILNLVGNAWAGFGASFSPLVLFALYWKGLTRAGAVSGMVSGALVVIVWIAWIKPLAHINEIFGLYEIIPGFIVSVIVTYVVSKLTKKPGAFVETDLNKVRDIVREK</sequence>
<proteinExistence type="inferred from homology"/>
<evidence type="ECO:0000250" key="1">
    <source>
        <dbReference type="UniProtKB" id="P07117"/>
    </source>
</evidence>
<evidence type="ECO:0000250" key="2">
    <source>
        <dbReference type="UniProtKB" id="Q2FWY7"/>
    </source>
</evidence>
<evidence type="ECO:0000255" key="3"/>
<evidence type="ECO:0000305" key="4"/>
<dbReference type="EMBL" id="AJ938182">
    <property type="protein sequence ID" value="CAI81524.1"/>
    <property type="molecule type" value="Genomic_DNA"/>
</dbReference>
<dbReference type="RefSeq" id="WP_000957029.1">
    <property type="nucleotide sequence ID" value="NC_007622.1"/>
</dbReference>
<dbReference type="SMR" id="Q2YU74"/>
<dbReference type="KEGG" id="sab:SAB1835"/>
<dbReference type="HOGENOM" id="CLU_018808_15_2_9"/>
<dbReference type="GO" id="GO:0005886">
    <property type="term" value="C:plasma membrane"/>
    <property type="evidence" value="ECO:0007669"/>
    <property type="project" value="UniProtKB-SubCell"/>
</dbReference>
<dbReference type="GO" id="GO:0015193">
    <property type="term" value="F:L-proline transmembrane transporter activity"/>
    <property type="evidence" value="ECO:0007669"/>
    <property type="project" value="TreeGrafter"/>
</dbReference>
<dbReference type="GO" id="GO:0005298">
    <property type="term" value="F:proline:sodium symporter activity"/>
    <property type="evidence" value="ECO:0007669"/>
    <property type="project" value="InterPro"/>
</dbReference>
<dbReference type="GO" id="GO:0031402">
    <property type="term" value="F:sodium ion binding"/>
    <property type="evidence" value="ECO:0007669"/>
    <property type="project" value="InterPro"/>
</dbReference>
<dbReference type="GO" id="GO:0015824">
    <property type="term" value="P:proline transport"/>
    <property type="evidence" value="ECO:0007669"/>
    <property type="project" value="InterPro"/>
</dbReference>
<dbReference type="CDD" id="cd11475">
    <property type="entry name" value="SLC5sbd_PutP"/>
    <property type="match status" value="1"/>
</dbReference>
<dbReference type="FunFam" id="1.20.1730.10:FF:000002">
    <property type="entry name" value="Sodium/proline symporter"/>
    <property type="match status" value="1"/>
</dbReference>
<dbReference type="Gene3D" id="1.20.1730.10">
    <property type="entry name" value="Sodium/glucose cotransporter"/>
    <property type="match status" value="1"/>
</dbReference>
<dbReference type="InterPro" id="IPR038377">
    <property type="entry name" value="Na/Glc_symporter_sf"/>
</dbReference>
<dbReference type="InterPro" id="IPR011851">
    <property type="entry name" value="Na/Pro_symporter"/>
</dbReference>
<dbReference type="InterPro" id="IPR001734">
    <property type="entry name" value="Na/solute_symporter"/>
</dbReference>
<dbReference type="InterPro" id="IPR050277">
    <property type="entry name" value="Sodium:Solute_Symporter"/>
</dbReference>
<dbReference type="NCBIfam" id="TIGR02121">
    <property type="entry name" value="Na_Pro_sym"/>
    <property type="match status" value="1"/>
</dbReference>
<dbReference type="NCBIfam" id="TIGR00813">
    <property type="entry name" value="sss"/>
    <property type="match status" value="1"/>
</dbReference>
<dbReference type="PANTHER" id="PTHR48086">
    <property type="entry name" value="SODIUM/PROLINE SYMPORTER-RELATED"/>
    <property type="match status" value="1"/>
</dbReference>
<dbReference type="PANTHER" id="PTHR48086:SF3">
    <property type="entry name" value="SODIUM_PROLINE SYMPORTER"/>
    <property type="match status" value="1"/>
</dbReference>
<dbReference type="Pfam" id="PF00474">
    <property type="entry name" value="SSF"/>
    <property type="match status" value="1"/>
</dbReference>
<dbReference type="PROSITE" id="PS50283">
    <property type="entry name" value="NA_SOLUT_SYMP_3"/>
    <property type="match status" value="1"/>
</dbReference>
<comment type="function">
    <text evidence="1 2">Catalyzes the sodium-dependent uptake of extracellular L-proline (By similarity). Since most S.aureus strains are L-proline auxotrophs, this transporter may aid the bacterial persistence during an infection of tissues with low proline concentrations (By similarity).</text>
</comment>
<comment type="catalytic activity">
    <reaction evidence="1">
        <text>L-proline(in) + Na(+)(in) = L-proline(out) + Na(+)(out)</text>
        <dbReference type="Rhea" id="RHEA:28967"/>
        <dbReference type="ChEBI" id="CHEBI:29101"/>
        <dbReference type="ChEBI" id="CHEBI:60039"/>
    </reaction>
</comment>
<comment type="subcellular location">
    <subcellularLocation>
        <location evidence="4">Cell membrane</location>
        <topology evidence="3">Multi-pass membrane protein</topology>
    </subcellularLocation>
</comment>
<comment type="similarity">
    <text evidence="4">Belongs to the sodium:solute symporter (SSF) (TC 2.A.21) family.</text>
</comment>
<gene>
    <name type="primary">putP</name>
    <name type="ordered locus">SAB1835</name>
</gene>
<reference key="1">
    <citation type="journal article" date="2007" name="PLoS ONE">
        <title>Molecular correlates of host specialization in Staphylococcus aureus.</title>
        <authorList>
            <person name="Herron-Olson L."/>
            <person name="Fitzgerald J.R."/>
            <person name="Musser J.M."/>
            <person name="Kapur V."/>
        </authorList>
    </citation>
    <scope>NUCLEOTIDE SEQUENCE [LARGE SCALE GENOMIC DNA]</scope>
    <source>
        <strain>bovine RF122 / ET3-1</strain>
    </source>
</reference>
<name>PUTP_STAAB</name>
<keyword id="KW-0029">Amino-acid transport</keyword>
<keyword id="KW-1003">Cell membrane</keyword>
<keyword id="KW-0406">Ion transport</keyword>
<keyword id="KW-0472">Membrane</keyword>
<keyword id="KW-0915">Sodium</keyword>
<keyword id="KW-0739">Sodium transport</keyword>
<keyword id="KW-0769">Symport</keyword>
<keyword id="KW-0812">Transmembrane</keyword>
<keyword id="KW-1133">Transmembrane helix</keyword>
<keyword id="KW-0813">Transport</keyword>